<accession>A6VV10</accession>
<comment type="function">
    <text evidence="1">GTPase that plays an essential role in the late steps of ribosome biogenesis.</text>
</comment>
<comment type="subunit">
    <text evidence="1">Associates with the 50S ribosomal subunit.</text>
</comment>
<comment type="similarity">
    <text evidence="1">Belongs to the TRAFAC class TrmE-Era-EngA-EngB-Septin-like GTPase superfamily. EngA (Der) GTPase family.</text>
</comment>
<keyword id="KW-0342">GTP-binding</keyword>
<keyword id="KW-0547">Nucleotide-binding</keyword>
<keyword id="KW-0677">Repeat</keyword>
<keyword id="KW-0690">Ribosome biogenesis</keyword>
<organism>
    <name type="scientific">Marinomonas sp. (strain MWYL1)</name>
    <dbReference type="NCBI Taxonomy" id="400668"/>
    <lineage>
        <taxon>Bacteria</taxon>
        <taxon>Pseudomonadati</taxon>
        <taxon>Pseudomonadota</taxon>
        <taxon>Gammaproteobacteria</taxon>
        <taxon>Oceanospirillales</taxon>
        <taxon>Oceanospirillaceae</taxon>
        <taxon>Marinomonas</taxon>
    </lineage>
</organism>
<sequence>MIPVIALVGRPNVGKSTLFNQLTRSRDALVADYPGLTRDRKYGDGKLGEHEFIVIDTGGISGDEQGIDEKMARQSLLAIEEADVVLFLVDGRHGLNPADEMIASHLRRSNKQVSLVVNKTDGINEDIALADFYSLGFGELHPIAASHGKGVHVLIDKVMLPFAERVEEAKNQISIESRGIRIGVVGRPNVGKSTLVNRMLGEDRVVVYDMPGTTRDSVYIPYVRNDKEYTLIDTAGIRRRKHVKEAVEKFSIVKALQAIQDANVVIVVIDSHENLVEQDLHMIGYVLDAGRGVIIAINKWDGLKKDDREHIKSEVERRLGFVPYAKVHYISALHGTGVGDLYDTIESTYESCYAKWTTNRLTRILEDSIAEHQPPMVNSRRIKLRYAHQGGSNPPRIVVHGNQTDSLPGSYKRYLENKFRTVLNITGTPIIFEFKSAENPFAPKK</sequence>
<proteinExistence type="inferred from homology"/>
<dbReference type="EMBL" id="CP000749">
    <property type="protein sequence ID" value="ABR70289.1"/>
    <property type="molecule type" value="Genomic_DNA"/>
</dbReference>
<dbReference type="SMR" id="A6VV10"/>
<dbReference type="STRING" id="400668.Mmwyl1_1360"/>
<dbReference type="KEGG" id="mmw:Mmwyl1_1360"/>
<dbReference type="eggNOG" id="COG1160">
    <property type="taxonomic scope" value="Bacteria"/>
</dbReference>
<dbReference type="HOGENOM" id="CLU_016077_6_2_6"/>
<dbReference type="OrthoDB" id="9805918at2"/>
<dbReference type="GO" id="GO:0016887">
    <property type="term" value="F:ATP hydrolysis activity"/>
    <property type="evidence" value="ECO:0007669"/>
    <property type="project" value="InterPro"/>
</dbReference>
<dbReference type="GO" id="GO:0005525">
    <property type="term" value="F:GTP binding"/>
    <property type="evidence" value="ECO:0007669"/>
    <property type="project" value="UniProtKB-UniRule"/>
</dbReference>
<dbReference type="GO" id="GO:0043022">
    <property type="term" value="F:ribosome binding"/>
    <property type="evidence" value="ECO:0007669"/>
    <property type="project" value="TreeGrafter"/>
</dbReference>
<dbReference type="GO" id="GO:0042254">
    <property type="term" value="P:ribosome biogenesis"/>
    <property type="evidence" value="ECO:0007669"/>
    <property type="project" value="UniProtKB-KW"/>
</dbReference>
<dbReference type="CDD" id="cd01894">
    <property type="entry name" value="EngA1"/>
    <property type="match status" value="1"/>
</dbReference>
<dbReference type="CDD" id="cd01895">
    <property type="entry name" value="EngA2"/>
    <property type="match status" value="1"/>
</dbReference>
<dbReference type="FunFam" id="3.30.300.20:FF:000004">
    <property type="entry name" value="GTPase Der"/>
    <property type="match status" value="1"/>
</dbReference>
<dbReference type="FunFam" id="3.40.50.300:FF:000040">
    <property type="entry name" value="GTPase Der"/>
    <property type="match status" value="1"/>
</dbReference>
<dbReference type="FunFam" id="3.40.50.300:FF:000057">
    <property type="entry name" value="GTPase Der"/>
    <property type="match status" value="1"/>
</dbReference>
<dbReference type="Gene3D" id="3.30.300.20">
    <property type="match status" value="1"/>
</dbReference>
<dbReference type="Gene3D" id="3.40.50.300">
    <property type="entry name" value="P-loop containing nucleotide triphosphate hydrolases"/>
    <property type="match status" value="2"/>
</dbReference>
<dbReference type="HAMAP" id="MF_00195">
    <property type="entry name" value="GTPase_Der"/>
    <property type="match status" value="1"/>
</dbReference>
<dbReference type="InterPro" id="IPR003593">
    <property type="entry name" value="AAA+_ATPase"/>
</dbReference>
<dbReference type="InterPro" id="IPR031166">
    <property type="entry name" value="G_ENGA"/>
</dbReference>
<dbReference type="InterPro" id="IPR006073">
    <property type="entry name" value="GTP-bd"/>
</dbReference>
<dbReference type="InterPro" id="IPR016484">
    <property type="entry name" value="GTPase_Der"/>
</dbReference>
<dbReference type="InterPro" id="IPR032859">
    <property type="entry name" value="KH_dom-like"/>
</dbReference>
<dbReference type="InterPro" id="IPR015946">
    <property type="entry name" value="KH_dom-like_a/b"/>
</dbReference>
<dbReference type="InterPro" id="IPR027417">
    <property type="entry name" value="P-loop_NTPase"/>
</dbReference>
<dbReference type="InterPro" id="IPR005225">
    <property type="entry name" value="Small_GTP-bd"/>
</dbReference>
<dbReference type="NCBIfam" id="TIGR03594">
    <property type="entry name" value="GTPase_EngA"/>
    <property type="match status" value="1"/>
</dbReference>
<dbReference type="NCBIfam" id="TIGR00231">
    <property type="entry name" value="small_GTP"/>
    <property type="match status" value="2"/>
</dbReference>
<dbReference type="PANTHER" id="PTHR43834">
    <property type="entry name" value="GTPASE DER"/>
    <property type="match status" value="1"/>
</dbReference>
<dbReference type="PANTHER" id="PTHR43834:SF6">
    <property type="entry name" value="GTPASE DER"/>
    <property type="match status" value="1"/>
</dbReference>
<dbReference type="Pfam" id="PF14714">
    <property type="entry name" value="KH_dom-like"/>
    <property type="match status" value="1"/>
</dbReference>
<dbReference type="Pfam" id="PF01926">
    <property type="entry name" value="MMR_HSR1"/>
    <property type="match status" value="2"/>
</dbReference>
<dbReference type="PIRSF" id="PIRSF006485">
    <property type="entry name" value="GTP-binding_EngA"/>
    <property type="match status" value="1"/>
</dbReference>
<dbReference type="PRINTS" id="PR00326">
    <property type="entry name" value="GTP1OBG"/>
</dbReference>
<dbReference type="SMART" id="SM00382">
    <property type="entry name" value="AAA"/>
    <property type="match status" value="2"/>
</dbReference>
<dbReference type="SUPFAM" id="SSF52540">
    <property type="entry name" value="P-loop containing nucleoside triphosphate hydrolases"/>
    <property type="match status" value="2"/>
</dbReference>
<dbReference type="PROSITE" id="PS51712">
    <property type="entry name" value="G_ENGA"/>
    <property type="match status" value="2"/>
</dbReference>
<evidence type="ECO:0000255" key="1">
    <source>
        <dbReference type="HAMAP-Rule" id="MF_00195"/>
    </source>
</evidence>
<gene>
    <name evidence="1" type="primary">der</name>
    <name type="synonym">engA</name>
    <name type="ordered locus">Mmwyl1_1360</name>
</gene>
<name>DER_MARMS</name>
<protein>
    <recommendedName>
        <fullName evidence="1">GTPase Der</fullName>
    </recommendedName>
    <alternativeName>
        <fullName evidence="1">GTP-binding protein EngA</fullName>
    </alternativeName>
</protein>
<reference key="1">
    <citation type="submission" date="2007-06" db="EMBL/GenBank/DDBJ databases">
        <title>Complete sequence of Marinomonas sp. MWYL1.</title>
        <authorList>
            <consortium name="US DOE Joint Genome Institute"/>
            <person name="Copeland A."/>
            <person name="Lucas S."/>
            <person name="Lapidus A."/>
            <person name="Barry K."/>
            <person name="Glavina del Rio T."/>
            <person name="Dalin E."/>
            <person name="Tice H."/>
            <person name="Pitluck S."/>
            <person name="Kiss H."/>
            <person name="Brettin T."/>
            <person name="Bruce D."/>
            <person name="Detter J.C."/>
            <person name="Han C."/>
            <person name="Schmutz J."/>
            <person name="Larimer F."/>
            <person name="Land M."/>
            <person name="Hauser L."/>
            <person name="Kyrpides N."/>
            <person name="Kim E."/>
            <person name="Johnston A.W.B."/>
            <person name="Todd J.D."/>
            <person name="Rogers R."/>
            <person name="Wexler M."/>
            <person name="Bond P.L."/>
            <person name="Li Y."/>
            <person name="Richardson P."/>
        </authorList>
    </citation>
    <scope>NUCLEOTIDE SEQUENCE [LARGE SCALE GENOMIC DNA]</scope>
    <source>
        <strain>MWYL1</strain>
    </source>
</reference>
<feature type="chain" id="PRO_1000077661" description="GTPase Der">
    <location>
        <begin position="1"/>
        <end position="445"/>
    </location>
</feature>
<feature type="domain" description="EngA-type G 1">
    <location>
        <begin position="3"/>
        <end position="166"/>
    </location>
</feature>
<feature type="domain" description="EngA-type G 2">
    <location>
        <begin position="180"/>
        <end position="353"/>
    </location>
</feature>
<feature type="domain" description="KH-like" evidence="1">
    <location>
        <begin position="354"/>
        <end position="438"/>
    </location>
</feature>
<feature type="binding site" evidence="1">
    <location>
        <begin position="9"/>
        <end position="16"/>
    </location>
    <ligand>
        <name>GTP</name>
        <dbReference type="ChEBI" id="CHEBI:37565"/>
        <label>1</label>
    </ligand>
</feature>
<feature type="binding site" evidence="1">
    <location>
        <begin position="56"/>
        <end position="60"/>
    </location>
    <ligand>
        <name>GTP</name>
        <dbReference type="ChEBI" id="CHEBI:37565"/>
        <label>1</label>
    </ligand>
</feature>
<feature type="binding site" evidence="1">
    <location>
        <begin position="118"/>
        <end position="121"/>
    </location>
    <ligand>
        <name>GTP</name>
        <dbReference type="ChEBI" id="CHEBI:37565"/>
        <label>1</label>
    </ligand>
</feature>
<feature type="binding site" evidence="1">
    <location>
        <begin position="186"/>
        <end position="193"/>
    </location>
    <ligand>
        <name>GTP</name>
        <dbReference type="ChEBI" id="CHEBI:37565"/>
        <label>2</label>
    </ligand>
</feature>
<feature type="binding site" evidence="1">
    <location>
        <begin position="233"/>
        <end position="237"/>
    </location>
    <ligand>
        <name>GTP</name>
        <dbReference type="ChEBI" id="CHEBI:37565"/>
        <label>2</label>
    </ligand>
</feature>
<feature type="binding site" evidence="1">
    <location>
        <begin position="298"/>
        <end position="301"/>
    </location>
    <ligand>
        <name>GTP</name>
        <dbReference type="ChEBI" id="CHEBI:37565"/>
        <label>2</label>
    </ligand>
</feature>